<protein>
    <recommendedName>
        <fullName>Metastasis-associated protein MTA3</fullName>
    </recommendedName>
</protein>
<sequence>MAANMYRVGDYVYFENSSSNPYLIRRIEELNKTASGNVEAKVVCFYRRRDISNTLIMLADKHAKEIEEESETTVEADLTDKQKHQLKHRELFLSRQYESLPATHIRGKCSVALLNETESVLSYLDKEDTFFYSLVYDPSLKTLLADKGEIRVGPRYQADIPEMLLEGESDEREQSKLEVKVWDPNSPLTDRQIDQFLVVARAVGTFARALDCSSSVRQPSLHMSAAAASRDITLFHAMDTLYRHSYDLSSAISVLVPLGGPVLCRDEMEEWSASEASLFEEALEKYGKDFNDIRQDFLPWKSLTSIIEYYYMWKTTDRYVQQKRLKAAEAESKLKQVYIPTYSKPNPNQISTSNGKPGAVNGAVGTTFQPQNPLLGRACESCYATQSHQWYSWGPPNMQCRLCAICWLYWKKYGGLKMPTQSEEEKLSPSPTTEDPRVRSHVSRQAMQGMPVRNTGSPKSAVKTRQAFFLHTTYFTKFARQVCKNTLRLRQAARRPFVAINYAAIRAEYADRHAELSGSPLKSKSTRKPLACIIGYLEIHPAKKPNVIRSTPSLQTPTTKRMLTTPNHTSLSILGKRNYSHHNGLDELTCCVSD</sequence>
<proteinExistence type="evidence at protein level"/>
<accession>Q9BTC8</accession>
<accession>Q9NSP2</accession>
<accession>Q9ULF4</accession>
<keyword id="KW-0025">Alternative splicing</keyword>
<keyword id="KW-0963">Cytoplasm</keyword>
<keyword id="KW-0238">DNA-binding</keyword>
<keyword id="KW-0479">Metal-binding</keyword>
<keyword id="KW-0539">Nucleus</keyword>
<keyword id="KW-0597">Phosphoprotein</keyword>
<keyword id="KW-1267">Proteomics identification</keyword>
<keyword id="KW-1185">Reference proteome</keyword>
<keyword id="KW-0862">Zinc</keyword>
<keyword id="KW-0863">Zinc-finger</keyword>
<evidence type="ECO:0000250" key="1">
    <source>
        <dbReference type="UniProtKB" id="Q924K8"/>
    </source>
</evidence>
<evidence type="ECO:0000255" key="2">
    <source>
        <dbReference type="PROSITE-ProRule" id="PRU00370"/>
    </source>
</evidence>
<evidence type="ECO:0000255" key="3">
    <source>
        <dbReference type="PROSITE-ProRule" id="PRU00512"/>
    </source>
</evidence>
<evidence type="ECO:0000255" key="4">
    <source>
        <dbReference type="PROSITE-ProRule" id="PRU00624"/>
    </source>
</evidence>
<evidence type="ECO:0000269" key="5">
    <source>
    </source>
</evidence>
<evidence type="ECO:0000269" key="6">
    <source>
    </source>
</evidence>
<evidence type="ECO:0000269" key="7">
    <source>
    </source>
</evidence>
<evidence type="ECO:0000269" key="8">
    <source>
    </source>
</evidence>
<evidence type="ECO:0000269" key="9">
    <source>
    </source>
</evidence>
<evidence type="ECO:0000269" key="10">
    <source>
    </source>
</evidence>
<evidence type="ECO:0000303" key="11">
    <source>
    </source>
</evidence>
<evidence type="ECO:0000303" key="12">
    <source>
    </source>
</evidence>
<evidence type="ECO:0000305" key="13"/>
<evidence type="ECO:0007744" key="14">
    <source>
    </source>
</evidence>
<evidence type="ECO:0007744" key="15">
    <source>
    </source>
</evidence>
<dbReference type="EMBL" id="AB033092">
    <property type="protein sequence ID" value="BAA86580.1"/>
    <property type="status" value="ALT_INIT"/>
    <property type="molecule type" value="mRNA"/>
</dbReference>
<dbReference type="EMBL" id="AK027304">
    <property type="protein sequence ID" value="BAB55028.1"/>
    <property type="molecule type" value="mRNA"/>
</dbReference>
<dbReference type="EMBL" id="BC004227">
    <property type="protein sequence ID" value="AAH04227.1"/>
    <property type="molecule type" value="mRNA"/>
</dbReference>
<dbReference type="EMBL" id="BC053631">
    <property type="protein sequence ID" value="AAH53631.1"/>
    <property type="molecule type" value="mRNA"/>
</dbReference>
<dbReference type="EMBL" id="AL161954">
    <property type="protein sequence ID" value="CAB82305.1"/>
    <property type="molecule type" value="mRNA"/>
</dbReference>
<dbReference type="CCDS" id="CCDS46267.1">
    <molecule id="Q9BTC8-2"/>
</dbReference>
<dbReference type="CCDS" id="CCDS82441.1">
    <molecule id="Q9BTC8-1"/>
</dbReference>
<dbReference type="PIR" id="T47180">
    <property type="entry name" value="T47180"/>
</dbReference>
<dbReference type="RefSeq" id="NP_001269684.1">
    <property type="nucleotide sequence ID" value="NM_001282755.1"/>
</dbReference>
<dbReference type="RefSeq" id="NP_001269685.1">
    <property type="nucleotide sequence ID" value="NM_001282756.1"/>
</dbReference>
<dbReference type="RefSeq" id="NP_001317371.1">
    <molecule id="Q9BTC8-1"/>
    <property type="nucleotide sequence ID" value="NM_001330442.2"/>
</dbReference>
<dbReference type="RefSeq" id="NP_065795.1">
    <molecule id="Q9BTC8-2"/>
    <property type="nucleotide sequence ID" value="NM_020744.4"/>
</dbReference>
<dbReference type="SMR" id="Q9BTC8"/>
<dbReference type="BioGRID" id="121568">
    <property type="interactions" value="177"/>
</dbReference>
<dbReference type="ComplexPortal" id="CPX-880">
    <property type="entry name" value="MBD2/NuRD nucleosome remodeling and deacetylase complex"/>
</dbReference>
<dbReference type="ComplexPortal" id="CPX-922">
    <property type="entry name" value="MBD3/NuRD nucleosome remodeling and deacetylase complex"/>
</dbReference>
<dbReference type="CORUM" id="Q9BTC8"/>
<dbReference type="DIP" id="DIP-47460N"/>
<dbReference type="FunCoup" id="Q9BTC8">
    <property type="interactions" value="3580"/>
</dbReference>
<dbReference type="IntAct" id="Q9BTC8">
    <property type="interactions" value="89"/>
</dbReference>
<dbReference type="MINT" id="Q9BTC8"/>
<dbReference type="STRING" id="9606.ENSP00000385823"/>
<dbReference type="GlyGen" id="Q9BTC8">
    <property type="glycosylation" value="1 site, 1 O-linked glycan (1 site)"/>
</dbReference>
<dbReference type="iPTMnet" id="Q9BTC8"/>
<dbReference type="MetOSite" id="Q9BTC8"/>
<dbReference type="PhosphoSitePlus" id="Q9BTC8"/>
<dbReference type="BioMuta" id="MTA3"/>
<dbReference type="DMDM" id="29840798"/>
<dbReference type="jPOST" id="Q9BTC8"/>
<dbReference type="MassIVE" id="Q9BTC8"/>
<dbReference type="PaxDb" id="9606-ENSP00000383973"/>
<dbReference type="PeptideAtlas" id="Q9BTC8"/>
<dbReference type="ProteomicsDB" id="78971">
    <molecule id="Q9BTC8-1"/>
</dbReference>
<dbReference type="ProteomicsDB" id="78972">
    <molecule id="Q9BTC8-2"/>
</dbReference>
<dbReference type="Pumba" id="Q9BTC8"/>
<dbReference type="Antibodypedia" id="29760">
    <property type="antibodies" value="274 antibodies from 28 providers"/>
</dbReference>
<dbReference type="DNASU" id="57504"/>
<dbReference type="Ensembl" id="ENST00000405094.2">
    <molecule id="Q9BTC8-1"/>
    <property type="protein sequence ID" value="ENSP00000385823.1"/>
    <property type="gene ID" value="ENSG00000057935.14"/>
</dbReference>
<dbReference type="Ensembl" id="ENST00000407270.7">
    <molecule id="Q9BTC8-2"/>
    <property type="protein sequence ID" value="ENSP00000385045.3"/>
    <property type="gene ID" value="ENSG00000057935.14"/>
</dbReference>
<dbReference type="GeneID" id="57504"/>
<dbReference type="KEGG" id="hsa:57504"/>
<dbReference type="MANE-Select" id="ENST00000405094.2">
    <property type="protein sequence ID" value="ENSP00000385823.1"/>
    <property type="RefSeq nucleotide sequence ID" value="NM_001330442.2"/>
    <property type="RefSeq protein sequence ID" value="NP_001317371.1"/>
</dbReference>
<dbReference type="UCSC" id="uc002rsq.5">
    <molecule id="Q9BTC8-1"/>
    <property type="organism name" value="human"/>
</dbReference>
<dbReference type="AGR" id="HGNC:23784"/>
<dbReference type="CTD" id="57504"/>
<dbReference type="DisGeNET" id="57504"/>
<dbReference type="GeneCards" id="MTA3"/>
<dbReference type="HGNC" id="HGNC:23784">
    <property type="gene designation" value="MTA3"/>
</dbReference>
<dbReference type="HPA" id="ENSG00000057935">
    <property type="expression patterns" value="Tissue enhanced (lymphoid)"/>
</dbReference>
<dbReference type="MIM" id="609050">
    <property type="type" value="gene"/>
</dbReference>
<dbReference type="neXtProt" id="NX_Q9BTC8"/>
<dbReference type="OpenTargets" id="ENSG00000057935"/>
<dbReference type="PharmGKB" id="PA134953540"/>
<dbReference type="VEuPathDB" id="HostDB:ENSG00000057935"/>
<dbReference type="eggNOG" id="KOG3554">
    <property type="taxonomic scope" value="Eukaryota"/>
</dbReference>
<dbReference type="GeneTree" id="ENSGT01030000234573"/>
<dbReference type="InParanoid" id="Q9BTC8"/>
<dbReference type="OMA" id="KRACRMP"/>
<dbReference type="OrthoDB" id="2193595at2759"/>
<dbReference type="PAN-GO" id="Q9BTC8">
    <property type="GO annotations" value="7 GO annotations based on evolutionary models"/>
</dbReference>
<dbReference type="PhylomeDB" id="Q9BTC8"/>
<dbReference type="TreeFam" id="TF106444"/>
<dbReference type="PathwayCommons" id="Q9BTC8"/>
<dbReference type="Reactome" id="R-HSA-3214815">
    <property type="pathway name" value="HDACs deacetylate histones"/>
</dbReference>
<dbReference type="Reactome" id="R-HSA-427389">
    <property type="pathway name" value="ERCC6 (CSB) and EHMT2 (G9a) positively regulate rRNA expression"/>
</dbReference>
<dbReference type="Reactome" id="R-HSA-73762">
    <property type="pathway name" value="RNA Polymerase I Transcription Initiation"/>
</dbReference>
<dbReference type="Reactome" id="R-HSA-8943724">
    <property type="pathway name" value="Regulation of PTEN gene transcription"/>
</dbReference>
<dbReference type="Reactome" id="R-HSA-9679191">
    <property type="pathway name" value="Potential therapeutics for SARS"/>
</dbReference>
<dbReference type="Reactome" id="R-HSA-9843940">
    <property type="pathway name" value="Regulation of endogenous retroelements by KRAB-ZFP proteins"/>
</dbReference>
<dbReference type="Reactome" id="R-HSA-9844594">
    <property type="pathway name" value="Transcriptional regulation of brown and beige adipocyte differentiation by EBF2"/>
</dbReference>
<dbReference type="Reactome" id="R-HSA-9845323">
    <property type="pathway name" value="Regulation of endogenous retroelements by Piwi-interacting RNAs (piRNAs)"/>
</dbReference>
<dbReference type="SignaLink" id="Q9BTC8"/>
<dbReference type="SIGNOR" id="Q9BTC8"/>
<dbReference type="BioGRID-ORCS" id="57504">
    <property type="hits" value="25 hits in 1181 CRISPR screens"/>
</dbReference>
<dbReference type="ChiTaRS" id="MTA3">
    <property type="organism name" value="human"/>
</dbReference>
<dbReference type="GeneWiki" id="MTA3"/>
<dbReference type="GenomeRNAi" id="57504"/>
<dbReference type="Pharos" id="Q9BTC8">
    <property type="development level" value="Tbio"/>
</dbReference>
<dbReference type="PRO" id="PR:Q9BTC8"/>
<dbReference type="Proteomes" id="UP000005640">
    <property type="component" value="Chromosome 2"/>
</dbReference>
<dbReference type="RNAct" id="Q9BTC8">
    <property type="molecule type" value="protein"/>
</dbReference>
<dbReference type="Bgee" id="ENSG00000057935">
    <property type="expression patterns" value="Expressed in right adrenal gland cortex and 161 other cell types or tissues"/>
</dbReference>
<dbReference type="ExpressionAtlas" id="Q9BTC8">
    <property type="expression patterns" value="baseline and differential"/>
</dbReference>
<dbReference type="GO" id="GO:0005737">
    <property type="term" value="C:cytoplasm"/>
    <property type="evidence" value="ECO:0007669"/>
    <property type="project" value="UniProtKB-SubCell"/>
</dbReference>
<dbReference type="GO" id="GO:0043231">
    <property type="term" value="C:intracellular membrane-bounded organelle"/>
    <property type="evidence" value="ECO:0000314"/>
    <property type="project" value="HPA"/>
</dbReference>
<dbReference type="GO" id="GO:0005654">
    <property type="term" value="C:nucleoplasm"/>
    <property type="evidence" value="ECO:0000314"/>
    <property type="project" value="HPA"/>
</dbReference>
<dbReference type="GO" id="GO:0005634">
    <property type="term" value="C:nucleus"/>
    <property type="evidence" value="ECO:0000314"/>
    <property type="project" value="UniProtKB"/>
</dbReference>
<dbReference type="GO" id="GO:0016581">
    <property type="term" value="C:NuRD complex"/>
    <property type="evidence" value="ECO:0000314"/>
    <property type="project" value="UniProtKB"/>
</dbReference>
<dbReference type="GO" id="GO:0003682">
    <property type="term" value="F:chromatin binding"/>
    <property type="evidence" value="ECO:0007669"/>
    <property type="project" value="InterPro"/>
</dbReference>
<dbReference type="GO" id="GO:0042826">
    <property type="term" value="F:histone deacetylase binding"/>
    <property type="evidence" value="ECO:0000318"/>
    <property type="project" value="GO_Central"/>
</dbReference>
<dbReference type="GO" id="GO:0044877">
    <property type="term" value="F:protein-containing complex binding"/>
    <property type="evidence" value="ECO:0007669"/>
    <property type="project" value="Ensembl"/>
</dbReference>
<dbReference type="GO" id="GO:0043565">
    <property type="term" value="F:sequence-specific DNA binding"/>
    <property type="evidence" value="ECO:0007669"/>
    <property type="project" value="InterPro"/>
</dbReference>
<dbReference type="GO" id="GO:0003713">
    <property type="term" value="F:transcription coactivator activity"/>
    <property type="evidence" value="ECO:0000318"/>
    <property type="project" value="GO_Central"/>
</dbReference>
<dbReference type="GO" id="GO:0003714">
    <property type="term" value="F:transcription corepressor activity"/>
    <property type="evidence" value="ECO:0000318"/>
    <property type="project" value="GO_Central"/>
</dbReference>
<dbReference type="GO" id="GO:0008270">
    <property type="term" value="F:zinc ion binding"/>
    <property type="evidence" value="ECO:0007669"/>
    <property type="project" value="UniProtKB-KW"/>
</dbReference>
<dbReference type="GO" id="GO:0006338">
    <property type="term" value="P:chromatin remodeling"/>
    <property type="evidence" value="ECO:0000314"/>
    <property type="project" value="ComplexPortal"/>
</dbReference>
<dbReference type="GO" id="GO:0000086">
    <property type="term" value="P:G2/M transition of mitotic cell cycle"/>
    <property type="evidence" value="ECO:0007669"/>
    <property type="project" value="Ensembl"/>
</dbReference>
<dbReference type="GO" id="GO:1990739">
    <property type="term" value="P:granulosa cell proliferation"/>
    <property type="evidence" value="ECO:0007669"/>
    <property type="project" value="Ensembl"/>
</dbReference>
<dbReference type="GO" id="GO:0045892">
    <property type="term" value="P:negative regulation of DNA-templated transcription"/>
    <property type="evidence" value="ECO:0000315"/>
    <property type="project" value="CACAO"/>
</dbReference>
<dbReference type="GO" id="GO:0000122">
    <property type="term" value="P:negative regulation of transcription by RNA polymerase II"/>
    <property type="evidence" value="ECO:0000318"/>
    <property type="project" value="GO_Central"/>
</dbReference>
<dbReference type="GO" id="GO:0045893">
    <property type="term" value="P:positive regulation of DNA-templated transcription"/>
    <property type="evidence" value="ECO:0000303"/>
    <property type="project" value="ComplexPortal"/>
</dbReference>
<dbReference type="GO" id="GO:0010971">
    <property type="term" value="P:positive regulation of G2/M transition of mitotic cell cycle"/>
    <property type="evidence" value="ECO:0007669"/>
    <property type="project" value="Ensembl"/>
</dbReference>
<dbReference type="GO" id="GO:1904197">
    <property type="term" value="P:positive regulation of granulosa cell proliferation"/>
    <property type="evidence" value="ECO:0007669"/>
    <property type="project" value="Ensembl"/>
</dbReference>
<dbReference type="GO" id="GO:0042659">
    <property type="term" value="P:regulation of cell fate specification"/>
    <property type="evidence" value="ECO:0000303"/>
    <property type="project" value="ComplexPortal"/>
</dbReference>
<dbReference type="GO" id="GO:2000736">
    <property type="term" value="P:regulation of stem cell differentiation"/>
    <property type="evidence" value="ECO:0000303"/>
    <property type="project" value="ComplexPortal"/>
</dbReference>
<dbReference type="CDD" id="cd04709">
    <property type="entry name" value="BAH_MTA"/>
    <property type="match status" value="1"/>
</dbReference>
<dbReference type="CDD" id="cd11661">
    <property type="entry name" value="SANT_MTA3_like"/>
    <property type="match status" value="1"/>
</dbReference>
<dbReference type="CDD" id="cd00202">
    <property type="entry name" value="ZnF_GATA"/>
    <property type="match status" value="1"/>
</dbReference>
<dbReference type="FunFam" id="2.30.30.490:FF:000022">
    <property type="entry name" value="Blast:Metastasis-associated protein MTA3"/>
    <property type="match status" value="1"/>
</dbReference>
<dbReference type="FunFam" id="1.10.10.60:FF:000012">
    <property type="entry name" value="Metastasis-associated 1 family, member 3"/>
    <property type="match status" value="1"/>
</dbReference>
<dbReference type="FunFam" id="4.10.1240.50:FF:000001">
    <property type="entry name" value="Metastasis-associated 1 family, member 3"/>
    <property type="match status" value="1"/>
</dbReference>
<dbReference type="FunFam" id="2.30.30.490:FF:000012">
    <property type="entry name" value="metastasis-associated protein MTA3 isoform X1"/>
    <property type="match status" value="1"/>
</dbReference>
<dbReference type="Gene3D" id="2.30.30.490">
    <property type="match status" value="1"/>
</dbReference>
<dbReference type="Gene3D" id="4.10.1240.50">
    <property type="match status" value="1"/>
</dbReference>
<dbReference type="Gene3D" id="1.10.10.60">
    <property type="entry name" value="Homeodomain-like"/>
    <property type="match status" value="1"/>
</dbReference>
<dbReference type="InterPro" id="IPR001025">
    <property type="entry name" value="BAH_dom"/>
</dbReference>
<dbReference type="InterPro" id="IPR043151">
    <property type="entry name" value="BAH_sf"/>
</dbReference>
<dbReference type="InterPro" id="IPR000949">
    <property type="entry name" value="ELM2_dom"/>
</dbReference>
<dbReference type="InterPro" id="IPR009057">
    <property type="entry name" value="Homeodomain-like_sf"/>
</dbReference>
<dbReference type="InterPro" id="IPR040138">
    <property type="entry name" value="MIER/MTA"/>
</dbReference>
<dbReference type="InterPro" id="IPR035170">
    <property type="entry name" value="MTA1_R1"/>
</dbReference>
<dbReference type="InterPro" id="IPR001005">
    <property type="entry name" value="SANT/Myb"/>
</dbReference>
<dbReference type="InterPro" id="IPR017884">
    <property type="entry name" value="SANT_dom"/>
</dbReference>
<dbReference type="InterPro" id="IPR000679">
    <property type="entry name" value="Znf_GATA"/>
</dbReference>
<dbReference type="PANTHER" id="PTHR10865">
    <property type="entry name" value="METASTASIS-ASSOCIATED PROTEIN AND MESODERM INDUCTION EARLY RESPONSE PROTEIN"/>
    <property type="match status" value="1"/>
</dbReference>
<dbReference type="PANTHER" id="PTHR10865:SF6">
    <property type="entry name" value="METASTASIS-ASSOCIATED PROTEIN MTA3"/>
    <property type="match status" value="1"/>
</dbReference>
<dbReference type="Pfam" id="PF01426">
    <property type="entry name" value="BAH"/>
    <property type="match status" value="1"/>
</dbReference>
<dbReference type="Pfam" id="PF01448">
    <property type="entry name" value="ELM2"/>
    <property type="match status" value="1"/>
</dbReference>
<dbReference type="Pfam" id="PF00320">
    <property type="entry name" value="GATA"/>
    <property type="match status" value="1"/>
</dbReference>
<dbReference type="Pfam" id="PF17226">
    <property type="entry name" value="MTA_R1"/>
    <property type="match status" value="1"/>
</dbReference>
<dbReference type="Pfam" id="PF00249">
    <property type="entry name" value="Myb_DNA-binding"/>
    <property type="match status" value="1"/>
</dbReference>
<dbReference type="SMART" id="SM00439">
    <property type="entry name" value="BAH"/>
    <property type="match status" value="1"/>
</dbReference>
<dbReference type="SMART" id="SM01189">
    <property type="entry name" value="ELM2"/>
    <property type="match status" value="1"/>
</dbReference>
<dbReference type="SMART" id="SM00717">
    <property type="entry name" value="SANT"/>
    <property type="match status" value="1"/>
</dbReference>
<dbReference type="SMART" id="SM00401">
    <property type="entry name" value="ZnF_GATA"/>
    <property type="match status" value="1"/>
</dbReference>
<dbReference type="SUPFAM" id="SSF46689">
    <property type="entry name" value="Homeodomain-like"/>
    <property type="match status" value="1"/>
</dbReference>
<dbReference type="PROSITE" id="PS51038">
    <property type="entry name" value="BAH"/>
    <property type="match status" value="1"/>
</dbReference>
<dbReference type="PROSITE" id="PS51156">
    <property type="entry name" value="ELM2"/>
    <property type="match status" value="1"/>
</dbReference>
<dbReference type="PROSITE" id="PS51293">
    <property type="entry name" value="SANT"/>
    <property type="match status" value="1"/>
</dbReference>
<gene>
    <name type="primary">MTA3</name>
    <name type="synonym">KIAA1266</name>
</gene>
<organism>
    <name type="scientific">Homo sapiens</name>
    <name type="common">Human</name>
    <dbReference type="NCBI Taxonomy" id="9606"/>
    <lineage>
        <taxon>Eukaryota</taxon>
        <taxon>Metazoa</taxon>
        <taxon>Chordata</taxon>
        <taxon>Craniata</taxon>
        <taxon>Vertebrata</taxon>
        <taxon>Euteleostomi</taxon>
        <taxon>Mammalia</taxon>
        <taxon>Eutheria</taxon>
        <taxon>Euarchontoglires</taxon>
        <taxon>Primates</taxon>
        <taxon>Haplorrhini</taxon>
        <taxon>Catarrhini</taxon>
        <taxon>Hominidae</taxon>
        <taxon>Homo</taxon>
    </lineage>
</organism>
<reference key="1">
    <citation type="journal article" date="1999" name="DNA Res.">
        <title>Prediction of the coding sequences of unidentified human genes. XV. The complete sequences of 100 new cDNA clones from brain which code for large proteins in vitro.</title>
        <authorList>
            <person name="Nagase T."/>
            <person name="Ishikawa K."/>
            <person name="Kikuno R."/>
            <person name="Hirosawa M."/>
            <person name="Nomura N."/>
            <person name="Ohara O."/>
        </authorList>
    </citation>
    <scope>NUCLEOTIDE SEQUENCE [LARGE SCALE MRNA] (ISOFORM 1)</scope>
    <source>
        <tissue>Brain</tissue>
    </source>
</reference>
<reference key="2">
    <citation type="journal article" date="2004" name="Nat. Genet.">
        <title>Complete sequencing and characterization of 21,243 full-length human cDNAs.</title>
        <authorList>
            <person name="Ota T."/>
            <person name="Suzuki Y."/>
            <person name="Nishikawa T."/>
            <person name="Otsuki T."/>
            <person name="Sugiyama T."/>
            <person name="Irie R."/>
            <person name="Wakamatsu A."/>
            <person name="Hayashi K."/>
            <person name="Sato H."/>
            <person name="Nagai K."/>
            <person name="Kimura K."/>
            <person name="Makita H."/>
            <person name="Sekine M."/>
            <person name="Obayashi M."/>
            <person name="Nishi T."/>
            <person name="Shibahara T."/>
            <person name="Tanaka T."/>
            <person name="Ishii S."/>
            <person name="Yamamoto J."/>
            <person name="Saito K."/>
            <person name="Kawai Y."/>
            <person name="Isono Y."/>
            <person name="Nakamura Y."/>
            <person name="Nagahari K."/>
            <person name="Murakami K."/>
            <person name="Yasuda T."/>
            <person name="Iwayanagi T."/>
            <person name="Wagatsuma M."/>
            <person name="Shiratori A."/>
            <person name="Sudo H."/>
            <person name="Hosoiri T."/>
            <person name="Kaku Y."/>
            <person name="Kodaira H."/>
            <person name="Kondo H."/>
            <person name="Sugawara M."/>
            <person name="Takahashi M."/>
            <person name="Kanda K."/>
            <person name="Yokoi T."/>
            <person name="Furuya T."/>
            <person name="Kikkawa E."/>
            <person name="Omura Y."/>
            <person name="Abe K."/>
            <person name="Kamihara K."/>
            <person name="Katsuta N."/>
            <person name="Sato K."/>
            <person name="Tanikawa M."/>
            <person name="Yamazaki M."/>
            <person name="Ninomiya K."/>
            <person name="Ishibashi T."/>
            <person name="Yamashita H."/>
            <person name="Murakawa K."/>
            <person name="Fujimori K."/>
            <person name="Tanai H."/>
            <person name="Kimata M."/>
            <person name="Watanabe M."/>
            <person name="Hiraoka S."/>
            <person name="Chiba Y."/>
            <person name="Ishida S."/>
            <person name="Ono Y."/>
            <person name="Takiguchi S."/>
            <person name="Watanabe S."/>
            <person name="Yosida M."/>
            <person name="Hotuta T."/>
            <person name="Kusano J."/>
            <person name="Kanehori K."/>
            <person name="Takahashi-Fujii A."/>
            <person name="Hara H."/>
            <person name="Tanase T.-O."/>
            <person name="Nomura Y."/>
            <person name="Togiya S."/>
            <person name="Komai F."/>
            <person name="Hara R."/>
            <person name="Takeuchi K."/>
            <person name="Arita M."/>
            <person name="Imose N."/>
            <person name="Musashino K."/>
            <person name="Yuuki H."/>
            <person name="Oshima A."/>
            <person name="Sasaki N."/>
            <person name="Aotsuka S."/>
            <person name="Yoshikawa Y."/>
            <person name="Matsunawa H."/>
            <person name="Ichihara T."/>
            <person name="Shiohata N."/>
            <person name="Sano S."/>
            <person name="Moriya S."/>
            <person name="Momiyama H."/>
            <person name="Satoh N."/>
            <person name="Takami S."/>
            <person name="Terashima Y."/>
            <person name="Suzuki O."/>
            <person name="Nakagawa S."/>
            <person name="Senoh A."/>
            <person name="Mizoguchi H."/>
            <person name="Goto Y."/>
            <person name="Shimizu F."/>
            <person name="Wakebe H."/>
            <person name="Hishigaki H."/>
            <person name="Watanabe T."/>
            <person name="Sugiyama A."/>
            <person name="Takemoto M."/>
            <person name="Kawakami B."/>
            <person name="Yamazaki M."/>
            <person name="Watanabe K."/>
            <person name="Kumagai A."/>
            <person name="Itakura S."/>
            <person name="Fukuzumi Y."/>
            <person name="Fujimori Y."/>
            <person name="Komiyama M."/>
            <person name="Tashiro H."/>
            <person name="Tanigami A."/>
            <person name="Fujiwara T."/>
            <person name="Ono T."/>
            <person name="Yamada K."/>
            <person name="Fujii Y."/>
            <person name="Ozaki K."/>
            <person name="Hirao M."/>
            <person name="Ohmori Y."/>
            <person name="Kawabata A."/>
            <person name="Hikiji T."/>
            <person name="Kobatake N."/>
            <person name="Inagaki H."/>
            <person name="Ikema Y."/>
            <person name="Okamoto S."/>
            <person name="Okitani R."/>
            <person name="Kawakami T."/>
            <person name="Noguchi S."/>
            <person name="Itoh T."/>
            <person name="Shigeta K."/>
            <person name="Senba T."/>
            <person name="Matsumura K."/>
            <person name="Nakajima Y."/>
            <person name="Mizuno T."/>
            <person name="Morinaga M."/>
            <person name="Sasaki M."/>
            <person name="Togashi T."/>
            <person name="Oyama M."/>
            <person name="Hata H."/>
            <person name="Watanabe M."/>
            <person name="Komatsu T."/>
            <person name="Mizushima-Sugano J."/>
            <person name="Satoh T."/>
            <person name="Shirai Y."/>
            <person name="Takahashi Y."/>
            <person name="Nakagawa K."/>
            <person name="Okumura K."/>
            <person name="Nagase T."/>
            <person name="Nomura N."/>
            <person name="Kikuchi H."/>
            <person name="Masuho Y."/>
            <person name="Yamashita R."/>
            <person name="Nakai K."/>
            <person name="Yada T."/>
            <person name="Nakamura Y."/>
            <person name="Ohara O."/>
            <person name="Isogai T."/>
            <person name="Sugano S."/>
        </authorList>
    </citation>
    <scope>NUCLEOTIDE SEQUENCE [LARGE SCALE MRNA] (ISOFORM 2)</scope>
    <source>
        <tissue>Embryo</tissue>
    </source>
</reference>
<reference key="3">
    <citation type="journal article" date="2004" name="Genome Res.">
        <title>The status, quality, and expansion of the NIH full-length cDNA project: the Mammalian Gene Collection (MGC).</title>
        <authorList>
            <consortium name="The MGC Project Team"/>
        </authorList>
    </citation>
    <scope>NUCLEOTIDE SEQUENCE [LARGE SCALE MRNA] (ISOFORM 2)</scope>
    <source>
        <tissue>Lymph</tissue>
        <tissue>Uterus</tissue>
    </source>
</reference>
<reference key="4">
    <citation type="journal article" date="2007" name="BMC Genomics">
        <title>The full-ORF clone resource of the German cDNA consortium.</title>
        <authorList>
            <person name="Bechtel S."/>
            <person name="Rosenfelder H."/>
            <person name="Duda A."/>
            <person name="Schmidt C.P."/>
            <person name="Ernst U."/>
            <person name="Wellenreuther R."/>
            <person name="Mehrle A."/>
            <person name="Schuster C."/>
            <person name="Bahr A."/>
            <person name="Bloecker H."/>
            <person name="Heubner D."/>
            <person name="Hoerlein A."/>
            <person name="Michel G."/>
            <person name="Wedler H."/>
            <person name="Koehrer K."/>
            <person name="Ottenwaelder B."/>
            <person name="Poustka A."/>
            <person name="Wiemann S."/>
            <person name="Schupp I."/>
        </authorList>
    </citation>
    <scope>NUCLEOTIDE SEQUENCE [LARGE SCALE MRNA] OF 485-594</scope>
    <source>
        <tissue>Testis</tissue>
    </source>
</reference>
<reference key="5">
    <citation type="journal article" date="2003" name="Cell">
        <title>MTA3, a Mi-2/NuRD complex subunit, regulates an invasive growth pathway in breast cancer.</title>
        <authorList>
            <person name="Fujita N."/>
            <person name="Jaye D.L."/>
            <person name="Kajita M."/>
            <person name="Geigerman C."/>
            <person name="Moreno C.S."/>
            <person name="Wade P.A."/>
        </authorList>
    </citation>
    <scope>IDENTIFICATION IN NURD COMPLEX</scope>
    <scope>INDUCTION</scope>
    <scope>SUBCELLULAR LOCATION</scope>
    <scope>TISSUE SPECIFICITY</scope>
    <scope>FUNCTION</scope>
</reference>
<reference key="6">
    <citation type="journal article" date="2004" name="Cell">
        <title>MTA3 and the Mi-2/NuRD complex regulate cell fate during B lymphocyte differentiation.</title>
        <authorList>
            <person name="Fujita N."/>
            <person name="Jaye D.L."/>
            <person name="Geigerman C."/>
            <person name="Akyildiz A."/>
            <person name="Mooney M.R."/>
            <person name="Boss J.M."/>
            <person name="Wade P.A."/>
        </authorList>
    </citation>
    <scope>FUNCTION</scope>
    <scope>INTERACTION WITH BCL6</scope>
    <scope>IDENTIFICATION IN THE NURD COMPLEX</scope>
</reference>
<reference key="7">
    <citation type="journal article" date="2006" name="Mol. Cell. Biol.">
        <title>MBD2/NuRD and MBD3/NuRD, two distinct complexes with different biochemical and functional properties.</title>
        <authorList>
            <person name="Le Guezennec X."/>
            <person name="Vermeulen M."/>
            <person name="Brinkman A.B."/>
            <person name="Hoeijmakers W.A."/>
            <person name="Cohen A."/>
            <person name="Lasonder E."/>
            <person name="Stunnenberg H.G."/>
        </authorList>
    </citation>
    <scope>FUNCTION</scope>
    <scope>IDENTIFICATION IN THE NURD COMPLEX</scope>
    <scope>IDENTIFICATION BY MASS SPECTROMETRY</scope>
</reference>
<reference key="8">
    <citation type="journal article" date="2011" name="Sci. Signal.">
        <title>System-wide temporal characterization of the proteome and phosphoproteome of human embryonic stem cell differentiation.</title>
        <authorList>
            <person name="Rigbolt K.T."/>
            <person name="Prokhorova T.A."/>
            <person name="Akimov V."/>
            <person name="Henningsen J."/>
            <person name="Johansen P.T."/>
            <person name="Kratchmarova I."/>
            <person name="Kassem M."/>
            <person name="Mann M."/>
            <person name="Olsen J.V."/>
            <person name="Blagoev B."/>
        </authorList>
    </citation>
    <scope>PHOSPHORYLATION [LARGE SCALE ANALYSIS] AT THR-455 AND SER-519</scope>
    <scope>IDENTIFICATION BY MASS SPECTROMETRY [LARGE SCALE ANALYSIS]</scope>
</reference>
<reference key="9">
    <citation type="journal article" date="2013" name="J. Proteome Res.">
        <title>Toward a comprehensive characterization of a human cancer cell phosphoproteome.</title>
        <authorList>
            <person name="Zhou H."/>
            <person name="Di Palma S."/>
            <person name="Preisinger C."/>
            <person name="Peng M."/>
            <person name="Polat A.N."/>
            <person name="Heck A.J."/>
            <person name="Mohammed S."/>
        </authorList>
    </citation>
    <scope>PHOSPHORYLATION [LARGE SCALE ANALYSIS] AT SER-428 AND SER-519</scope>
    <scope>IDENTIFICATION BY MASS SPECTROMETRY [LARGE SCALE ANALYSIS]</scope>
    <source>
        <tissue>Cervix carcinoma</tissue>
        <tissue>Erythroleukemia</tissue>
    </source>
</reference>
<reference key="10">
    <citation type="journal article" date="2013" name="Oncogene">
        <title>RBB, a novel transcription repressor, represses the transcription of HDM2 oncogene.</title>
        <authorList>
            <person name="Xuan C."/>
            <person name="Wang Q."/>
            <person name="Han X."/>
            <person name="Duan Y."/>
            <person name="Li L."/>
            <person name="Shi L."/>
            <person name="Wang Y."/>
            <person name="Shan L."/>
            <person name="Yao Z."/>
            <person name="Shang Y."/>
        </authorList>
    </citation>
    <scope>INTERACTION WITH NACC2</scope>
</reference>
<reference key="11">
    <citation type="journal article" date="2017" name="Nucleic Acids Res.">
        <title>CHD3 and CHD4 form distinct NuRD complexes with different yet overlapping functionality.</title>
        <authorList>
            <person name="Hoffmeister H."/>
            <person name="Fuchs A."/>
            <person name="Erdel F."/>
            <person name="Pinz S."/>
            <person name="Groebner-Ferreira R."/>
            <person name="Bruckmann A."/>
            <person name="Deutzmann R."/>
            <person name="Schwartz U."/>
            <person name="Maldonado R."/>
            <person name="Huber C."/>
            <person name="Dendorfer A.S."/>
            <person name="Rippe K."/>
            <person name="Laengst G."/>
        </authorList>
    </citation>
    <scope>FUNCTION</scope>
    <scope>IDENTIFICATION IN THE NURD COMPLEX</scope>
    <scope>IDENTIFICATION BY MASS SPECTROMETRY</scope>
    <scope>SUBCELLULAR LOCATION</scope>
</reference>
<reference key="12">
    <citation type="journal article" date="2021" name="FEBS J.">
        <title>Cross-linking mass spectrometry reveals the structural topology of peripheral NuRD subunits relative to the core complex.</title>
        <authorList>
            <person name="Spruijt C.G."/>
            <person name="Graewe C."/>
            <person name="Kleinendorst S.C."/>
            <person name="Baltissen M.P.A."/>
            <person name="Vermeulen M."/>
        </authorList>
    </citation>
    <scope>IDENTIFICATION IN THE NURD COMPLEX</scope>
    <scope>IDENTIFICATION BY MASS SPECTROMETRY</scope>
    <scope>SUBCELLULAR LOCATION</scope>
</reference>
<feature type="chain" id="PRO_0000083498" description="Metastasis-associated protein MTA3">
    <location>
        <begin position="1"/>
        <end position="594"/>
    </location>
</feature>
<feature type="domain" description="BAH" evidence="2">
    <location>
        <begin position="1"/>
        <end position="147"/>
    </location>
</feature>
<feature type="domain" description="ELM2" evidence="3">
    <location>
        <begin position="148"/>
        <end position="259"/>
    </location>
</feature>
<feature type="domain" description="SANT" evidence="4">
    <location>
        <begin position="266"/>
        <end position="318"/>
    </location>
</feature>
<feature type="zinc finger region" description="GATA-type; atypical">
    <location>
        <begin position="379"/>
        <end position="406"/>
    </location>
</feature>
<feature type="modified residue" description="Phosphoserine" evidence="15">
    <location>
        <position position="428"/>
    </location>
</feature>
<feature type="modified residue" description="Phosphoserine" evidence="1">
    <location>
        <position position="430"/>
    </location>
</feature>
<feature type="modified residue" description="Phosphothreonine" evidence="14">
    <location>
        <position position="455"/>
    </location>
</feature>
<feature type="modified residue" description="Phosphoserine" evidence="14 15">
    <location>
        <position position="519"/>
    </location>
</feature>
<feature type="splice variant" id="VSP_001603" description="In isoform 2." evidence="11 12">
    <original>YADRHAE</original>
    <variation>CKMLLNS</variation>
    <location>
        <begin position="509"/>
        <end position="515"/>
    </location>
</feature>
<feature type="splice variant" id="VSP_001604" description="In isoform 2." evidence="11 12">
    <location>
        <begin position="516"/>
        <end position="594"/>
    </location>
</feature>
<feature type="sequence conflict" description="In Ref. 1; BAA86580." evidence="13" ref="1">
    <original>MAANMYRVG</original>
    <variation>ATGGFPRDR</variation>
    <location>
        <begin position="1"/>
        <end position="9"/>
    </location>
</feature>
<feature type="sequence conflict" description="In Ref. 1; BAA86580." evidence="13" ref="1">
    <location>
        <position position="343"/>
    </location>
</feature>
<comment type="function">
    <text evidence="5 6 7 9">Acts as a component of the histone deacetylase NuRD complex which participates in the remodeling of chromatin (PubMed:12705869, PubMed:16428440, PubMed:28977666). Plays a role in maintenance of the normal epithelial architecture through the repression of SNAI1 transcription in a histone deacetylase-dependent manner, and thus the regulation of E-cadherin levels (PubMed:12705869). Contributes to transcriptional repression by BCL6 (PubMed:15454082).</text>
</comment>
<comment type="subunit">
    <text evidence="1 5 6 7 8 9 10">Component of the nucleosome remodeling and deacetylase (NuRD) repressor complex, composed of core proteins MTA1, MTA2, MTA3, RBBP4, RBBP7, HDAC1, HDAC2, MBD2, MBD3, and peripherally associated proteins CDK2AP1, CDK2AP2, GATAD2A, GATAD2B, CHD3, CHD4 and CHD5 (PubMed:12705869, PubMed:15454082, PubMed:16428440, PubMed:28977666, PubMed:33283408). The exact stoichiometry of the NuRD complex is unknown, and some subunits such as MBD2 and MBD3, GATAD2A and GATAD2B, and CHD3, CHD4 and CHD5 define mutually exclusive NuRD complexes (PubMed:16428440, PubMed:28977666). Interacts with BCL6 (PubMed:15454082). Interacts with NACC2 (PubMed:22926524). Interacts with PWWP2B (By similarity).</text>
</comment>
<comment type="interaction">
    <interactant intactId="EBI-2461787">
        <id>Q9BTC8</id>
    </interactant>
    <interactant intactId="EBI-744366">
        <id>Q96KQ7</id>
        <label>EHMT2</label>
    </interactant>
    <organismsDiffer>false</organismsDiffer>
    <experiments>18</experiments>
</comment>
<comment type="interaction">
    <interactant intactId="EBI-2461787">
        <id>Q9BTC8</id>
    </interactant>
    <interactant intactId="EBI-6664760">
        <id>P23771</id>
        <label>GATA3</label>
    </interactant>
    <organismsDiffer>false</organismsDiffer>
    <experiments>18</experiments>
</comment>
<comment type="subcellular location">
    <subcellularLocation>
        <location evidence="3 4 5 9 10">Nucleus</location>
    </subcellularLocation>
    <subcellularLocation>
        <location evidence="1">Cytoplasm</location>
    </subcellularLocation>
</comment>
<comment type="alternative products">
    <event type="alternative splicing"/>
    <isoform>
        <id>Q9BTC8-1</id>
        <name>1</name>
        <sequence type="displayed"/>
    </isoform>
    <isoform>
        <id>Q9BTC8-2</id>
        <name>2</name>
        <sequence type="described" ref="VSP_001603 VSP_001604"/>
    </isoform>
</comment>
<comment type="tissue specificity">
    <text evidence="5">Expressed in germinal centers of lymphoid tissues. No expression in nonepithelial cells.</text>
</comment>
<comment type="induction">
    <text evidence="5">By estrogen.</text>
</comment>
<comment type="similarity">
    <text evidence="13">Belongs to the metastasis-associated protein family.</text>
</comment>
<comment type="sequence caution" evidence="13">
    <conflict type="erroneous initiation">
        <sequence resource="EMBL-CDS" id="BAA86580"/>
    </conflict>
</comment>
<comment type="online information" name="Atlas of Genetics and Cytogenetics in Oncology and Haematology">
    <link uri="https://atlasgeneticsoncology.org/gene/41445/mta3"/>
</comment>
<name>MTA3_HUMAN</name>